<comment type="function">
    <text evidence="2 3">Catalytic component of the NuA4 histone acetyltransferase (HAT) complex which is involved in epigenetic transcriptional activation of selected genes principally by acetylation of nucleosomal histones H4, H3, H2B, H2A and H2A variant H2A.Z (By similarity). Acetylates histone H4 to form H4K5ac, H4K8ac, H4K12ac and H4K16ac, histone H3 to form H3K14ac, and histone H2A to form H2AK4ac and H2AK7ac (By similarity). The NuA4 complex is involved in the DNA damage response and is required for chromosome segregation. The NuA4 complex plays a direct role in repair of DNA double-strand breaks (DSBs) through homologous recombination (By similarity). Recruitment to promoters depends on H3K4me. Also acetylates non-histone proteins (By similarity). In addition to protein acetyltransferase, can use different acyl-CoA substrates, such as 2-hydroxyisobutanoyl-CoA (2-hydroxyisobutyryl-CoA) or (2E)-butenoyl-CoA (crotonyl-CoA), and is able to mediate protein 2-hydroxyisobutyrylation and crotonylation, respectively (By similarity).</text>
</comment>
<comment type="catalytic activity">
    <reaction evidence="2">
        <text>L-lysyl-[histone] + acetyl-CoA = N(6)-acetyl-L-lysyl-[histone] + CoA + H(+)</text>
        <dbReference type="Rhea" id="RHEA:21992"/>
        <dbReference type="Rhea" id="RHEA-COMP:9845"/>
        <dbReference type="Rhea" id="RHEA-COMP:11338"/>
        <dbReference type="ChEBI" id="CHEBI:15378"/>
        <dbReference type="ChEBI" id="CHEBI:29969"/>
        <dbReference type="ChEBI" id="CHEBI:57287"/>
        <dbReference type="ChEBI" id="CHEBI:57288"/>
        <dbReference type="ChEBI" id="CHEBI:61930"/>
        <dbReference type="EC" id="2.3.1.48"/>
    </reaction>
    <physiologicalReaction direction="left-to-right" evidence="2">
        <dbReference type="Rhea" id="RHEA:21993"/>
    </physiologicalReaction>
</comment>
<comment type="catalytic activity">
    <reaction evidence="3">
        <text>L-lysyl-[protein] + acetyl-CoA = N(6)-acetyl-L-lysyl-[protein] + CoA + H(+)</text>
        <dbReference type="Rhea" id="RHEA:45948"/>
        <dbReference type="Rhea" id="RHEA-COMP:9752"/>
        <dbReference type="Rhea" id="RHEA-COMP:10731"/>
        <dbReference type="ChEBI" id="CHEBI:15378"/>
        <dbReference type="ChEBI" id="CHEBI:29969"/>
        <dbReference type="ChEBI" id="CHEBI:57287"/>
        <dbReference type="ChEBI" id="CHEBI:57288"/>
        <dbReference type="ChEBI" id="CHEBI:61930"/>
    </reaction>
    <physiologicalReaction direction="left-to-right" evidence="3">
        <dbReference type="Rhea" id="RHEA:45949"/>
    </physiologicalReaction>
</comment>
<comment type="catalytic activity">
    <reaction evidence="2">
        <text>2-hydroxyisobutanoyl-CoA + L-lysyl-[protein] = N(6)-(2-hydroxyisobutanoyl)-L-lysyl-[protein] + CoA + H(+)</text>
        <dbReference type="Rhea" id="RHEA:24180"/>
        <dbReference type="Rhea" id="RHEA-COMP:9752"/>
        <dbReference type="Rhea" id="RHEA-COMP:15921"/>
        <dbReference type="ChEBI" id="CHEBI:15378"/>
        <dbReference type="ChEBI" id="CHEBI:29969"/>
        <dbReference type="ChEBI" id="CHEBI:57287"/>
        <dbReference type="ChEBI" id="CHEBI:131780"/>
        <dbReference type="ChEBI" id="CHEBI:144968"/>
    </reaction>
    <physiologicalReaction direction="left-to-right" evidence="2">
        <dbReference type="Rhea" id="RHEA:24181"/>
    </physiologicalReaction>
</comment>
<comment type="catalytic activity">
    <reaction evidence="3">
        <text>(2E)-butenoyl-CoA + L-lysyl-[protein] = N(6)-(2E)-butenoyl-L-lysyl-[protein] + CoA + H(+)</text>
        <dbReference type="Rhea" id="RHEA:53908"/>
        <dbReference type="Rhea" id="RHEA-COMP:9752"/>
        <dbReference type="Rhea" id="RHEA-COMP:13707"/>
        <dbReference type="ChEBI" id="CHEBI:15378"/>
        <dbReference type="ChEBI" id="CHEBI:29969"/>
        <dbReference type="ChEBI" id="CHEBI:57287"/>
        <dbReference type="ChEBI" id="CHEBI:57332"/>
        <dbReference type="ChEBI" id="CHEBI:137954"/>
    </reaction>
    <physiologicalReaction direction="left-to-right" evidence="3">
        <dbReference type="Rhea" id="RHEA:53909"/>
    </physiologicalReaction>
</comment>
<comment type="subunit">
    <text evidence="3">Component of the NuA4 histone acetyltransferase complex.</text>
</comment>
<comment type="subcellular location">
    <subcellularLocation>
        <location evidence="2">Nucleus</location>
    </subcellularLocation>
    <subcellularLocation>
        <location evidence="2">Chromosome</location>
    </subcellularLocation>
    <text evidence="2">Following DNA damage, localizes to sites of DNA damage, such as double stand breaks (DSBs).</text>
</comment>
<comment type="domain">
    <text evidence="3">The ESA1-RPD3 motif is common to ESA1 and RPD3 and is required for ESA1 histone acetyl-transferase (HAT) activity and RPD3 histone deacetylase (HDAC) activity.</text>
</comment>
<comment type="PTM">
    <text evidence="3">Autoacetylation at Lys-381 is required for proper function.</text>
</comment>
<comment type="similarity">
    <text evidence="7">Belongs to the MYST (SAS/MOZ) family.</text>
</comment>
<proteinExistence type="inferred from homology"/>
<organism>
    <name type="scientific">Cryptococcus neoformans var. neoformans serotype D (strain B-3501A)</name>
    <name type="common">Filobasidiella neoformans</name>
    <dbReference type="NCBI Taxonomy" id="283643"/>
    <lineage>
        <taxon>Eukaryota</taxon>
        <taxon>Fungi</taxon>
        <taxon>Dikarya</taxon>
        <taxon>Basidiomycota</taxon>
        <taxon>Agaricomycotina</taxon>
        <taxon>Tremellomycetes</taxon>
        <taxon>Tremellales</taxon>
        <taxon>Cryptococcaceae</taxon>
        <taxon>Cryptococcus</taxon>
        <taxon>Cryptococcus neoformans species complex</taxon>
    </lineage>
</organism>
<sequence length="564" mass="63050">MSPSAPSTPHGRGSGSEPGTPAPSVAAGGSYTIDDVVPGVKIYVIKPLSNGQAEQRRAEILSTRPKPKPSAFAPPPPPNAPSPDPRDDTEYYVHYVEFNKRLDEWVGGSRLVLSKEMEWPKSKDEPKKKDRPAKAQPSKAPSRATGSPIPSDSLLKKAANKAAMAAGKATPGKAMPSSKLGKASKIGKAGKFPQKRKAKTEADTEAEEESNEDNDALGEEEDMDEDGDVTLITSDGAIDPSREVVAAPSNPRAAPQVFSKKQEIEKLRTSGSMTQSHSEISRVKNLNKLQIGKHEVETWYFSPYPIEYAHLPVLYICEFCLLYYPSATQLRRHRAKCTLLHPPGNEIYRHEGISFFEIDGRKQRTWCRNLCLISKCFLDHKTLYYDVDPFLYYCMTVKDDYGCHLIGYFSKEKESAEGYNVACILTLPQHQRKGYGRLLIEFSYELSKVEGKLGSPEKPLSDLGLLGYRAYWQEKIVELLLDSDYEISLDEIAQKTSITHGDIMHTCQALQMIKYYKNSHIIHLTDAVIEQHKKTKAKPRRAINPAYLKWKPPVFSRAQLAFGF</sequence>
<keyword id="KW-0007">Acetylation</keyword>
<keyword id="KW-0010">Activator</keyword>
<keyword id="KW-0156">Chromatin regulator</keyword>
<keyword id="KW-0158">Chromosome</keyword>
<keyword id="KW-0227">DNA damage</keyword>
<keyword id="KW-0234">DNA repair</keyword>
<keyword id="KW-0479">Metal-binding</keyword>
<keyword id="KW-0539">Nucleus</keyword>
<keyword id="KW-0804">Transcription</keyword>
<keyword id="KW-0805">Transcription regulation</keyword>
<keyword id="KW-0808">Transferase</keyword>
<keyword id="KW-0862">Zinc</keyword>
<keyword id="KW-0863">Zinc-finger</keyword>
<accession>P0CP03</accession>
<accession>Q55XW1</accession>
<accession>Q5KM33</accession>
<protein>
    <recommendedName>
        <fullName>Histone acetyltransferase ESA1</fullName>
        <ecNumber evidence="3">2.3.1.48</ecNumber>
    </recommendedName>
    <alternativeName>
        <fullName evidence="7">Protein 2-hydroxyisobutyryltransferase ESA1</fullName>
        <ecNumber evidence="2">2.3.1.-</ecNumber>
    </alternativeName>
    <alternativeName>
        <fullName evidence="7">Protein acetyltransferase ESA1</fullName>
        <ecNumber evidence="3">2.3.1.-</ecNumber>
    </alternativeName>
    <alternativeName>
        <fullName evidence="7">Protein crotonyltransferase ESA1</fullName>
        <ecNumber evidence="3">2.3.1.-</ecNumber>
    </alternativeName>
</protein>
<reference key="1">
    <citation type="journal article" date="2005" name="Science">
        <title>The genome of the basidiomycetous yeast and human pathogen Cryptococcus neoformans.</title>
        <authorList>
            <person name="Loftus B.J."/>
            <person name="Fung E."/>
            <person name="Roncaglia P."/>
            <person name="Rowley D."/>
            <person name="Amedeo P."/>
            <person name="Bruno D."/>
            <person name="Vamathevan J."/>
            <person name="Miranda M."/>
            <person name="Anderson I.J."/>
            <person name="Fraser J.A."/>
            <person name="Allen J.E."/>
            <person name="Bosdet I.E."/>
            <person name="Brent M.R."/>
            <person name="Chiu R."/>
            <person name="Doering T.L."/>
            <person name="Donlin M.J."/>
            <person name="D'Souza C.A."/>
            <person name="Fox D.S."/>
            <person name="Grinberg V."/>
            <person name="Fu J."/>
            <person name="Fukushima M."/>
            <person name="Haas B.J."/>
            <person name="Huang J.C."/>
            <person name="Janbon G."/>
            <person name="Jones S.J.M."/>
            <person name="Koo H.L."/>
            <person name="Krzywinski M.I."/>
            <person name="Kwon-Chung K.J."/>
            <person name="Lengeler K.B."/>
            <person name="Maiti R."/>
            <person name="Marra M.A."/>
            <person name="Marra R.E."/>
            <person name="Mathewson C.A."/>
            <person name="Mitchell T.G."/>
            <person name="Pertea M."/>
            <person name="Riggs F.R."/>
            <person name="Salzberg S.L."/>
            <person name="Schein J.E."/>
            <person name="Shvartsbeyn A."/>
            <person name="Shin H."/>
            <person name="Shumway M."/>
            <person name="Specht C.A."/>
            <person name="Suh B.B."/>
            <person name="Tenney A."/>
            <person name="Utterback T.R."/>
            <person name="Wickes B.L."/>
            <person name="Wortman J.R."/>
            <person name="Wye N.H."/>
            <person name="Kronstad J.W."/>
            <person name="Lodge J.K."/>
            <person name="Heitman J."/>
            <person name="Davis R.W."/>
            <person name="Fraser C.M."/>
            <person name="Hyman R.W."/>
        </authorList>
    </citation>
    <scope>NUCLEOTIDE SEQUENCE [LARGE SCALE GENOMIC DNA]</scope>
    <source>
        <strain>B-3501A</strain>
    </source>
</reference>
<name>ESA1_CRYNB</name>
<evidence type="ECO:0000250" key="1"/>
<evidence type="ECO:0000250" key="2">
    <source>
        <dbReference type="UniProtKB" id="O94446"/>
    </source>
</evidence>
<evidence type="ECO:0000250" key="3">
    <source>
        <dbReference type="UniProtKB" id="Q08649"/>
    </source>
</evidence>
<evidence type="ECO:0000255" key="4"/>
<evidence type="ECO:0000255" key="5">
    <source>
        <dbReference type="PROSITE-ProRule" id="PRU01063"/>
    </source>
</evidence>
<evidence type="ECO:0000256" key="6">
    <source>
        <dbReference type="SAM" id="MobiDB-lite"/>
    </source>
</evidence>
<evidence type="ECO:0000305" key="7"/>
<gene>
    <name type="primary">ESA1</name>
    <name type="ordered locus">CNBB2530</name>
</gene>
<feature type="chain" id="PRO_0000410158" description="Histone acetyltransferase ESA1">
    <location>
        <begin position="1"/>
        <end position="564"/>
    </location>
</feature>
<feature type="domain" description="Tudor-knot" evidence="4">
    <location>
        <begin position="36"/>
        <end position="112"/>
    </location>
</feature>
<feature type="domain" description="MYST-type HAT" evidence="5">
    <location>
        <begin position="281"/>
        <end position="552"/>
    </location>
</feature>
<feature type="zinc finger region" description="C2HC MYST-type" evidence="5">
    <location>
        <begin position="314"/>
        <end position="339"/>
    </location>
</feature>
<feature type="region of interest" description="Disordered" evidence="6">
    <location>
        <begin position="1"/>
        <end position="31"/>
    </location>
</feature>
<feature type="region of interest" description="Disordered" evidence="6">
    <location>
        <begin position="47"/>
        <end position="88"/>
    </location>
</feature>
<feature type="region of interest" description="Disordered" evidence="6">
    <location>
        <begin position="113"/>
        <end position="259"/>
    </location>
</feature>
<feature type="short sequence motif" description="ESA1-RPD3 motif" evidence="1">
    <location>
        <begin position="364"/>
        <end position="385"/>
    </location>
</feature>
<feature type="compositionally biased region" description="Pro residues" evidence="6">
    <location>
        <begin position="72"/>
        <end position="83"/>
    </location>
</feature>
<feature type="compositionally biased region" description="Basic and acidic residues" evidence="6">
    <location>
        <begin position="113"/>
        <end position="128"/>
    </location>
</feature>
<feature type="compositionally biased region" description="Low complexity" evidence="6">
    <location>
        <begin position="156"/>
        <end position="176"/>
    </location>
</feature>
<feature type="compositionally biased region" description="Acidic residues" evidence="6">
    <location>
        <begin position="203"/>
        <end position="228"/>
    </location>
</feature>
<feature type="active site" description="Proton donor/acceptor" evidence="3">
    <location>
        <position position="457"/>
    </location>
</feature>
<feature type="binding site" evidence="3">
    <location>
        <begin position="422"/>
        <end position="426"/>
    </location>
    <ligand>
        <name>acetyl-CoA</name>
        <dbReference type="ChEBI" id="CHEBI:57288"/>
    </ligand>
</feature>
<feature type="binding site" evidence="3">
    <location>
        <begin position="431"/>
        <end position="437"/>
    </location>
    <ligand>
        <name>acetyl-CoA</name>
        <dbReference type="ChEBI" id="CHEBI:57288"/>
    </ligand>
</feature>
<feature type="binding site" evidence="3">
    <location>
        <position position="461"/>
    </location>
    <ligand>
        <name>acetyl-CoA</name>
        <dbReference type="ChEBI" id="CHEBI:57288"/>
    </ligand>
</feature>
<feature type="site" description="Important for catalytic activity" evidence="3">
    <location>
        <position position="423"/>
    </location>
</feature>
<feature type="modified residue" description="N6-acetyllysine; by autocatalysis" evidence="3">
    <location>
        <position position="381"/>
    </location>
</feature>
<dbReference type="EC" id="2.3.1.48" evidence="3"/>
<dbReference type="EC" id="2.3.1.-" evidence="2 3"/>
<dbReference type="EMBL" id="AAEY01000009">
    <property type="protein sequence ID" value="EAL22621.1"/>
    <property type="molecule type" value="Genomic_DNA"/>
</dbReference>
<dbReference type="RefSeq" id="XP_777268.1">
    <property type="nucleotide sequence ID" value="XM_772175.1"/>
</dbReference>
<dbReference type="SMR" id="P0CP03"/>
<dbReference type="EnsemblFungi" id="AAW41586">
    <property type="protein sequence ID" value="AAW41586"/>
    <property type="gene ID" value="CNB03160"/>
</dbReference>
<dbReference type="GeneID" id="4934345"/>
<dbReference type="KEGG" id="cnb:CNBB2530"/>
<dbReference type="VEuPathDB" id="FungiDB:CNBB2530"/>
<dbReference type="HOGENOM" id="CLU_011815_2_0_1"/>
<dbReference type="OrthoDB" id="6127at5206"/>
<dbReference type="GO" id="GO:0035267">
    <property type="term" value="C:NuA4 histone acetyltransferase complex"/>
    <property type="evidence" value="ECO:0007669"/>
    <property type="project" value="EnsemblFungi"/>
</dbReference>
<dbReference type="GO" id="GO:0005721">
    <property type="term" value="C:pericentric heterochromatin"/>
    <property type="evidence" value="ECO:0007669"/>
    <property type="project" value="EnsemblFungi"/>
</dbReference>
<dbReference type="GO" id="GO:0035861">
    <property type="term" value="C:site of double-strand break"/>
    <property type="evidence" value="ECO:0007669"/>
    <property type="project" value="EnsemblFungi"/>
</dbReference>
<dbReference type="GO" id="GO:0000812">
    <property type="term" value="C:Swr1 complex"/>
    <property type="evidence" value="ECO:0007669"/>
    <property type="project" value="EnsemblFungi"/>
</dbReference>
<dbReference type="GO" id="GO:0003682">
    <property type="term" value="F:chromatin binding"/>
    <property type="evidence" value="ECO:0007669"/>
    <property type="project" value="TreeGrafter"/>
</dbReference>
<dbReference type="GO" id="GO:0044016">
    <property type="term" value="F:histone H3K4 acetyltransferase activity"/>
    <property type="evidence" value="ECO:0007669"/>
    <property type="project" value="EnsemblFungi"/>
</dbReference>
<dbReference type="GO" id="GO:0106226">
    <property type="term" value="F:peptide 2-hydroxyisobutyryltransferase activity"/>
    <property type="evidence" value="ECO:0007669"/>
    <property type="project" value="RHEA"/>
</dbReference>
<dbReference type="GO" id="GO:0140065">
    <property type="term" value="F:peptide butyryltransferase activity"/>
    <property type="evidence" value="ECO:0007669"/>
    <property type="project" value="EnsemblFungi"/>
</dbReference>
<dbReference type="GO" id="GO:0140064">
    <property type="term" value="F:peptide crotonyltransferase activity"/>
    <property type="evidence" value="ECO:0007669"/>
    <property type="project" value="RHEA"/>
</dbReference>
<dbReference type="GO" id="GO:0003712">
    <property type="term" value="F:transcription coregulator activity"/>
    <property type="evidence" value="ECO:0007669"/>
    <property type="project" value="TreeGrafter"/>
</dbReference>
<dbReference type="GO" id="GO:0008270">
    <property type="term" value="F:zinc ion binding"/>
    <property type="evidence" value="ECO:0007669"/>
    <property type="project" value="UniProtKB-KW"/>
</dbReference>
<dbReference type="GO" id="GO:0006281">
    <property type="term" value="P:DNA repair"/>
    <property type="evidence" value="ECO:0007669"/>
    <property type="project" value="UniProtKB-KW"/>
</dbReference>
<dbReference type="GO" id="GO:0140861">
    <property type="term" value="P:DNA repair-dependent chromatin remodeling"/>
    <property type="evidence" value="ECO:0007669"/>
    <property type="project" value="EnsemblFungi"/>
</dbReference>
<dbReference type="GO" id="GO:0031453">
    <property type="term" value="P:positive regulation of heterochromatin formation"/>
    <property type="evidence" value="ECO:0007669"/>
    <property type="project" value="EnsemblFungi"/>
</dbReference>
<dbReference type="GO" id="GO:0006357">
    <property type="term" value="P:regulation of transcription by RNA polymerase II"/>
    <property type="evidence" value="ECO:0007669"/>
    <property type="project" value="TreeGrafter"/>
</dbReference>
<dbReference type="CDD" id="cd04301">
    <property type="entry name" value="NAT_SF"/>
    <property type="match status" value="1"/>
</dbReference>
<dbReference type="FunFam" id="1.10.10.10:FF:000022">
    <property type="entry name" value="Histone acetyltransferase"/>
    <property type="match status" value="1"/>
</dbReference>
<dbReference type="FunFam" id="3.30.60.60:FF:000001">
    <property type="entry name" value="Histone acetyltransferase"/>
    <property type="match status" value="1"/>
</dbReference>
<dbReference type="FunFam" id="3.40.630.30:FF:000002">
    <property type="entry name" value="Histone acetyltransferase"/>
    <property type="match status" value="1"/>
</dbReference>
<dbReference type="Gene3D" id="2.30.30.140">
    <property type="match status" value="1"/>
</dbReference>
<dbReference type="Gene3D" id="3.40.630.30">
    <property type="match status" value="1"/>
</dbReference>
<dbReference type="Gene3D" id="3.30.60.60">
    <property type="entry name" value="N-acetyl transferase-like"/>
    <property type="match status" value="1"/>
</dbReference>
<dbReference type="Gene3D" id="1.10.10.10">
    <property type="entry name" value="Winged helix-like DNA-binding domain superfamily/Winged helix DNA-binding domain"/>
    <property type="match status" value="1"/>
</dbReference>
<dbReference type="InterPro" id="IPR016181">
    <property type="entry name" value="Acyl_CoA_acyltransferase"/>
</dbReference>
<dbReference type="InterPro" id="IPR016197">
    <property type="entry name" value="Chromo-like_dom_sf"/>
</dbReference>
<dbReference type="InterPro" id="IPR000953">
    <property type="entry name" value="Chromo/chromo_shadow_dom"/>
</dbReference>
<dbReference type="InterPro" id="IPR002717">
    <property type="entry name" value="HAT_MYST-type"/>
</dbReference>
<dbReference type="InterPro" id="IPR050603">
    <property type="entry name" value="MYST_HAT"/>
</dbReference>
<dbReference type="InterPro" id="IPR025995">
    <property type="entry name" value="Tudor-knot"/>
</dbReference>
<dbReference type="InterPro" id="IPR036388">
    <property type="entry name" value="WH-like_DNA-bd_sf"/>
</dbReference>
<dbReference type="InterPro" id="IPR040706">
    <property type="entry name" value="Zf-MYST"/>
</dbReference>
<dbReference type="PANTHER" id="PTHR10615">
    <property type="entry name" value="HISTONE ACETYLTRANSFERASE"/>
    <property type="match status" value="1"/>
</dbReference>
<dbReference type="PANTHER" id="PTHR10615:SF218">
    <property type="entry name" value="HISTONE ACETYLTRANSFERASE ESA1"/>
    <property type="match status" value="1"/>
</dbReference>
<dbReference type="Pfam" id="PF01853">
    <property type="entry name" value="MOZ_SAS"/>
    <property type="match status" value="1"/>
</dbReference>
<dbReference type="Pfam" id="PF11717">
    <property type="entry name" value="Tudor-knot"/>
    <property type="match status" value="1"/>
</dbReference>
<dbReference type="Pfam" id="PF17772">
    <property type="entry name" value="zf-MYST"/>
    <property type="match status" value="1"/>
</dbReference>
<dbReference type="SMART" id="SM00298">
    <property type="entry name" value="CHROMO"/>
    <property type="match status" value="1"/>
</dbReference>
<dbReference type="SUPFAM" id="SSF55729">
    <property type="entry name" value="Acyl-CoA N-acyltransferases (Nat)"/>
    <property type="match status" value="1"/>
</dbReference>
<dbReference type="SUPFAM" id="SSF54160">
    <property type="entry name" value="Chromo domain-like"/>
    <property type="match status" value="1"/>
</dbReference>
<dbReference type="PROSITE" id="PS51726">
    <property type="entry name" value="MYST_HAT"/>
    <property type="match status" value="1"/>
</dbReference>